<feature type="transit peptide" description="Chloroplast" evidence="3">
    <location>
        <begin position="1"/>
        <end position="28" status="uncertain"/>
    </location>
</feature>
<feature type="transit peptide" description="Thylakoid" evidence="3">
    <location>
        <begin position="29" status="uncertain"/>
        <end position="66" status="uncertain"/>
    </location>
</feature>
<feature type="chain" id="PRO_0000239671" description="Photosystem II stability/assembly factor HCF136, chloroplastic">
    <location>
        <begin position="67" status="uncertain"/>
        <end position="395"/>
    </location>
</feature>
<proteinExistence type="inferred from homology"/>
<dbReference type="EMBL" id="AJ010592">
    <property type="protein sequence ID" value="CAC27022.1"/>
    <property type="molecule type" value="Genomic_DNA"/>
</dbReference>
<dbReference type="PIR" id="C90108">
    <property type="entry name" value="C90108"/>
</dbReference>
<dbReference type="RefSeq" id="XP_001713238.1">
    <property type="nucleotide sequence ID" value="XM_001713186.1"/>
</dbReference>
<dbReference type="SMR" id="Q9AW48"/>
<dbReference type="GeneID" id="857462"/>
<dbReference type="Proteomes" id="UP000242167">
    <property type="component" value="Chromosome 2"/>
</dbReference>
<dbReference type="GO" id="GO:0009543">
    <property type="term" value="C:chloroplast thylakoid lumen"/>
    <property type="evidence" value="ECO:0007669"/>
    <property type="project" value="UniProtKB-SubCell"/>
</dbReference>
<dbReference type="GO" id="GO:0009523">
    <property type="term" value="C:photosystem II"/>
    <property type="evidence" value="ECO:0007669"/>
    <property type="project" value="UniProtKB-KW"/>
</dbReference>
<dbReference type="GO" id="GO:0015979">
    <property type="term" value="P:photosynthesis"/>
    <property type="evidence" value="ECO:0007669"/>
    <property type="project" value="UniProtKB-KW"/>
</dbReference>
<dbReference type="Gene3D" id="2.130.10.10">
    <property type="entry name" value="YVTN repeat-like/Quinoprotein amine dehydrogenase"/>
    <property type="match status" value="2"/>
</dbReference>
<dbReference type="InterPro" id="IPR028203">
    <property type="entry name" value="PSII_CF48-like_dom"/>
</dbReference>
<dbReference type="InterPro" id="IPR015943">
    <property type="entry name" value="WD40/YVTN_repeat-like_dom_sf"/>
</dbReference>
<dbReference type="InterPro" id="IPR016705">
    <property type="entry name" value="Ycf48/Hcf136"/>
</dbReference>
<dbReference type="NCBIfam" id="NF010237">
    <property type="entry name" value="PRK13684.1"/>
    <property type="match status" value="1"/>
</dbReference>
<dbReference type="PANTHER" id="PTHR47199">
    <property type="entry name" value="PHOTOSYSTEM II STABILITY/ASSEMBLY FACTOR HCF136, CHLOROPLASTIC"/>
    <property type="match status" value="1"/>
</dbReference>
<dbReference type="PANTHER" id="PTHR47199:SF2">
    <property type="entry name" value="PHOTOSYSTEM II STABILITY_ASSEMBLY FACTOR HCF136, CHLOROPLASTIC"/>
    <property type="match status" value="1"/>
</dbReference>
<dbReference type="Pfam" id="PF14870">
    <property type="entry name" value="PSII_BNR"/>
    <property type="match status" value="1"/>
</dbReference>
<dbReference type="PIRSF" id="PIRSF017875">
    <property type="entry name" value="PSII_HCF136"/>
    <property type="match status" value="1"/>
</dbReference>
<dbReference type="SUPFAM" id="SSF110296">
    <property type="entry name" value="Oligoxyloglucan reducing end-specific cellobiohydrolase"/>
    <property type="match status" value="1"/>
</dbReference>
<accession>Q9AW48</accession>
<name>P2SAF_GUITH</name>
<protein>
    <recommendedName>
        <fullName>Photosystem II stability/assembly factor HCF136, chloroplastic</fullName>
    </recommendedName>
</protein>
<keyword id="KW-0150">Chloroplast</keyword>
<keyword id="KW-0602">Photosynthesis</keyword>
<keyword id="KW-0604">Photosystem II</keyword>
<keyword id="KW-0934">Plastid</keyword>
<keyword id="KW-0793">Thylakoid</keyword>
<keyword id="KW-0809">Transit peptide</keyword>
<comment type="function">
    <text evidence="2">Essential for photosystem II (PSII) biogenesis; required for assembly of an early intermediate in PSII assembly that includes D2 (psbD) and cytochrome b559.</text>
</comment>
<comment type="subcellular location">
    <subcellularLocation>
        <location evidence="2">Plastid</location>
        <location evidence="2">Chloroplast thylakoid lumen</location>
    </subcellularLocation>
</comment>
<comment type="domain">
    <text evidence="1">A 7-bladed beta-propeller torus, about 54 by 55 Angstroms, with a depth of about 25 Angstroms and a central pore.</text>
</comment>
<comment type="similarity">
    <text evidence="4">Belongs to the Ycf48 family.</text>
</comment>
<gene>
    <name type="primary">hcf136</name>
</gene>
<reference key="1">
    <citation type="journal article" date="2001" name="Nature">
        <title>The highly reduced genome of an enslaved algal nucleus.</title>
        <authorList>
            <person name="Douglas S.E."/>
            <person name="Zauner S."/>
            <person name="Fraunholz M."/>
            <person name="Beaton M."/>
            <person name="Penny S.L."/>
            <person name="Deng L.-T."/>
            <person name="Wu X."/>
            <person name="Reith M.E."/>
            <person name="Cavalier-Smith T."/>
            <person name="Maier U.-G."/>
        </authorList>
    </citation>
    <scope>NUCLEOTIDE SEQUENCE [LARGE SCALE GENOMIC DNA]</scope>
</reference>
<organism>
    <name type="scientific">Guillardia theta</name>
    <name type="common">Cryptophyte</name>
    <name type="synonym">Cryptomonas phi</name>
    <dbReference type="NCBI Taxonomy" id="55529"/>
    <lineage>
        <taxon>Eukaryota</taxon>
        <taxon>Cryptophyceae</taxon>
        <taxon>Pyrenomonadales</taxon>
        <taxon>Geminigeraceae</taxon>
        <taxon>Guillardia</taxon>
    </lineage>
</organism>
<evidence type="ECO:0000250" key="1">
    <source>
        <dbReference type="UniProtKB" id="M1VJU3"/>
    </source>
</evidence>
<evidence type="ECO:0000250" key="2">
    <source>
        <dbReference type="UniProtKB" id="O82660"/>
    </source>
</evidence>
<evidence type="ECO:0000255" key="3"/>
<evidence type="ECO:0000305" key="4"/>
<geneLocation type="nucleomorph"/>
<sequence>MFINSFCLKNLLPVFSKNKTFLLNVKCLSNNKFENHSNFFKINRTKFINYLLYPTLTSLYPKFTHANTTSWTKVDLPVDSVLFDIEFTDPECKHGWLVGSKGTFLETDDGGNTWVPRTFANLDPDEELTYRFENISFEGQEGWVIGKPAIILYTKDGGKTWFRVPVSPKLPGEPCLIKALGSESAELTTTSGAIYVTNNAGRNWKAQVKETIDSTLNRTISSGVSGASYFTGNVINVIRNSEGKYLAISSRGNFYLTWEPGQDFWIPRARETSRRIQSMGFIQNDNQKGIWMSTRGGGLSVSTKNFDFESISSFNFENIDIKTGGYGILDAAFVNDKDIWIICGGGIVYNSTDKGKNWTKVDGIDKLSGNLYKIKFVNNNKGFILGSNGLLLRYQ</sequence>